<gene>
    <name evidence="1" type="primary">gatB</name>
    <name type="ordered locus">STK_02820</name>
</gene>
<reference key="1">
    <citation type="journal article" date="2001" name="DNA Res.">
        <title>Complete genome sequence of an aerobic thermoacidophilic Crenarchaeon, Sulfolobus tokodaii strain7.</title>
        <authorList>
            <person name="Kawarabayasi Y."/>
            <person name="Hino Y."/>
            <person name="Horikawa H."/>
            <person name="Jin-no K."/>
            <person name="Takahashi M."/>
            <person name="Sekine M."/>
            <person name="Baba S."/>
            <person name="Ankai A."/>
            <person name="Kosugi H."/>
            <person name="Hosoyama A."/>
            <person name="Fukui S."/>
            <person name="Nagai Y."/>
            <person name="Nishijima K."/>
            <person name="Otsuka R."/>
            <person name="Nakazawa H."/>
            <person name="Takamiya M."/>
            <person name="Kato Y."/>
            <person name="Yoshizawa T."/>
            <person name="Tanaka T."/>
            <person name="Kudoh Y."/>
            <person name="Yamazaki J."/>
            <person name="Kushida N."/>
            <person name="Oguchi A."/>
            <person name="Aoki K."/>
            <person name="Masuda S."/>
            <person name="Yanagii M."/>
            <person name="Nishimura M."/>
            <person name="Yamagishi A."/>
            <person name="Oshima T."/>
            <person name="Kikuchi H."/>
        </authorList>
    </citation>
    <scope>NUCLEOTIDE SEQUENCE [LARGE SCALE GENOMIC DNA]</scope>
    <source>
        <strain>DSM 16993 / JCM 10545 / NBRC 100140 / 7</strain>
    </source>
</reference>
<comment type="function">
    <text evidence="1">Allows the formation of correctly charged Asn-tRNA(Asn) or Gln-tRNA(Gln) through the transamidation of misacylated Asp-tRNA(Asn) or Glu-tRNA(Gln) in organisms which lack either or both of asparaginyl-tRNA or glutaminyl-tRNA synthetases. The reaction takes place in the presence of glutamine and ATP through an activated phospho-Asp-tRNA(Asn) or phospho-Glu-tRNA(Gln).</text>
</comment>
<comment type="catalytic activity">
    <reaction evidence="1">
        <text>L-glutamyl-tRNA(Gln) + L-glutamine + ATP + H2O = L-glutaminyl-tRNA(Gln) + L-glutamate + ADP + phosphate + H(+)</text>
        <dbReference type="Rhea" id="RHEA:17521"/>
        <dbReference type="Rhea" id="RHEA-COMP:9681"/>
        <dbReference type="Rhea" id="RHEA-COMP:9684"/>
        <dbReference type="ChEBI" id="CHEBI:15377"/>
        <dbReference type="ChEBI" id="CHEBI:15378"/>
        <dbReference type="ChEBI" id="CHEBI:29985"/>
        <dbReference type="ChEBI" id="CHEBI:30616"/>
        <dbReference type="ChEBI" id="CHEBI:43474"/>
        <dbReference type="ChEBI" id="CHEBI:58359"/>
        <dbReference type="ChEBI" id="CHEBI:78520"/>
        <dbReference type="ChEBI" id="CHEBI:78521"/>
        <dbReference type="ChEBI" id="CHEBI:456216"/>
    </reaction>
</comment>
<comment type="catalytic activity">
    <reaction evidence="1">
        <text>L-aspartyl-tRNA(Asn) + L-glutamine + ATP + H2O = L-asparaginyl-tRNA(Asn) + L-glutamate + ADP + phosphate + 2 H(+)</text>
        <dbReference type="Rhea" id="RHEA:14513"/>
        <dbReference type="Rhea" id="RHEA-COMP:9674"/>
        <dbReference type="Rhea" id="RHEA-COMP:9677"/>
        <dbReference type="ChEBI" id="CHEBI:15377"/>
        <dbReference type="ChEBI" id="CHEBI:15378"/>
        <dbReference type="ChEBI" id="CHEBI:29985"/>
        <dbReference type="ChEBI" id="CHEBI:30616"/>
        <dbReference type="ChEBI" id="CHEBI:43474"/>
        <dbReference type="ChEBI" id="CHEBI:58359"/>
        <dbReference type="ChEBI" id="CHEBI:78515"/>
        <dbReference type="ChEBI" id="CHEBI:78516"/>
        <dbReference type="ChEBI" id="CHEBI:456216"/>
    </reaction>
</comment>
<comment type="subunit">
    <text evidence="1">Heterotrimer of A, B and C subunits.</text>
</comment>
<comment type="similarity">
    <text evidence="1">Belongs to the GatB/GatE family. GatB subfamily.</text>
</comment>
<keyword id="KW-0067">ATP-binding</keyword>
<keyword id="KW-0436">Ligase</keyword>
<keyword id="KW-0547">Nucleotide-binding</keyword>
<keyword id="KW-0648">Protein biosynthesis</keyword>
<keyword id="KW-1185">Reference proteome</keyword>
<accession>Q975Z6</accession>
<accession>F9VMS7</accession>
<protein>
    <recommendedName>
        <fullName evidence="1">Aspartyl/glutamyl-tRNA(Asn/Gln) amidotransferase subunit B</fullName>
        <shortName evidence="1">Asp/Glu-ADT subunit B</shortName>
        <ecNumber evidence="1">6.3.5.-</ecNumber>
    </recommendedName>
</protein>
<evidence type="ECO:0000255" key="1">
    <source>
        <dbReference type="HAMAP-Rule" id="MF_00121"/>
    </source>
</evidence>
<organism>
    <name type="scientific">Sulfurisphaera tokodaii (strain DSM 16993 / JCM 10545 / NBRC 100140 / 7)</name>
    <name type="common">Sulfolobus tokodaii</name>
    <dbReference type="NCBI Taxonomy" id="273063"/>
    <lineage>
        <taxon>Archaea</taxon>
        <taxon>Thermoproteota</taxon>
        <taxon>Thermoprotei</taxon>
        <taxon>Sulfolobales</taxon>
        <taxon>Sulfolobaceae</taxon>
        <taxon>Sulfurisphaera</taxon>
    </lineage>
</organism>
<feature type="chain" id="PRO_0000148878" description="Aspartyl/glutamyl-tRNA(Asn/Gln) amidotransferase subunit B">
    <location>
        <begin position="1"/>
        <end position="473"/>
    </location>
</feature>
<sequence length="473" mass="53297">MVKIGLEVHVHLTSLKTKLFCSCPSDYTGKDPNTNVCPICLGLPGAIPVLNENAVKAAIMVALAINAEIANSLIMVRKHYFYPDMAKNYQISQYDGPGSIAISKGGYLKLREGKTVRIRRINIEEDPAKIIYPTGSMLTSKYTLLDYNRSGMGLLEIVTEPDMTEPKEAREFLEKLRSILEHLGVCNCDLEGAMRADANVSVEGGERVEIKNIGSPREVEEALKYEIARQKAAIAQGLPVKRETRHWDSERKVTVPTRTKETEEDYRYFPDPDLPPYPITQDLIEEIRKTLPELPDLRIKRLVTQYGISDYDATVLVMDKALADLFEETAKHYSNYKKLVNLLINDYLRWLNDKNLRPSQSKAGSQHLVELLKLLDDGVITIKIAKEILPEIVLEGKMPSSIIKERGLVAIKDEDYLINVIKEVINEEPDAAEKAKNDPKVINYLVGKVMKKTGKRADPQLTNELIKKILGIK</sequence>
<name>GATB_SULTO</name>
<dbReference type="EC" id="6.3.5.-" evidence="1"/>
<dbReference type="EMBL" id="BA000023">
    <property type="protein sequence ID" value="BAK54223.1"/>
    <property type="molecule type" value="Genomic_DNA"/>
</dbReference>
<dbReference type="RefSeq" id="WP_052846244.1">
    <property type="nucleotide sequence ID" value="NC_003106.2"/>
</dbReference>
<dbReference type="SMR" id="Q975Z6"/>
<dbReference type="STRING" id="273063.STK_02820"/>
<dbReference type="GeneID" id="1458186"/>
<dbReference type="KEGG" id="sto:STK_02820"/>
<dbReference type="PATRIC" id="fig|273063.9.peg.336"/>
<dbReference type="eggNOG" id="arCOG01718">
    <property type="taxonomic scope" value="Archaea"/>
</dbReference>
<dbReference type="OrthoDB" id="52755at2157"/>
<dbReference type="Proteomes" id="UP000001015">
    <property type="component" value="Chromosome"/>
</dbReference>
<dbReference type="GO" id="GO:0050566">
    <property type="term" value="F:asparaginyl-tRNA synthase (glutamine-hydrolyzing) activity"/>
    <property type="evidence" value="ECO:0007669"/>
    <property type="project" value="RHEA"/>
</dbReference>
<dbReference type="GO" id="GO:0005524">
    <property type="term" value="F:ATP binding"/>
    <property type="evidence" value="ECO:0007669"/>
    <property type="project" value="UniProtKB-KW"/>
</dbReference>
<dbReference type="GO" id="GO:0050567">
    <property type="term" value="F:glutaminyl-tRNA synthase (glutamine-hydrolyzing) activity"/>
    <property type="evidence" value="ECO:0007669"/>
    <property type="project" value="UniProtKB-UniRule"/>
</dbReference>
<dbReference type="GO" id="GO:0070681">
    <property type="term" value="P:glutaminyl-tRNAGln biosynthesis via transamidation"/>
    <property type="evidence" value="ECO:0007669"/>
    <property type="project" value="TreeGrafter"/>
</dbReference>
<dbReference type="GO" id="GO:0006412">
    <property type="term" value="P:translation"/>
    <property type="evidence" value="ECO:0007669"/>
    <property type="project" value="UniProtKB-UniRule"/>
</dbReference>
<dbReference type="Gene3D" id="1.10.10.410">
    <property type="match status" value="1"/>
</dbReference>
<dbReference type="Gene3D" id="1.10.150.380">
    <property type="entry name" value="GatB domain, N-terminal subdomain"/>
    <property type="match status" value="1"/>
</dbReference>
<dbReference type="HAMAP" id="MF_00121">
    <property type="entry name" value="GatB"/>
    <property type="match status" value="1"/>
</dbReference>
<dbReference type="InterPro" id="IPR017959">
    <property type="entry name" value="Asn/Gln-tRNA_amidoTrfase_suB/E"/>
</dbReference>
<dbReference type="InterPro" id="IPR006075">
    <property type="entry name" value="Asn/Gln-tRNA_Trfase_suB/E_cat"/>
</dbReference>
<dbReference type="InterPro" id="IPR018027">
    <property type="entry name" value="Asn/Gln_amidotransferase"/>
</dbReference>
<dbReference type="InterPro" id="IPR003789">
    <property type="entry name" value="Asn/Gln_tRNA_amidoTrase-B-like"/>
</dbReference>
<dbReference type="InterPro" id="IPR004413">
    <property type="entry name" value="GatB"/>
</dbReference>
<dbReference type="InterPro" id="IPR042114">
    <property type="entry name" value="GatB_C_1"/>
</dbReference>
<dbReference type="InterPro" id="IPR023168">
    <property type="entry name" value="GatB_Yqey_C_2"/>
</dbReference>
<dbReference type="InterPro" id="IPR017958">
    <property type="entry name" value="Gln-tRNA_amidoTrfase_suB_CS"/>
</dbReference>
<dbReference type="InterPro" id="IPR014746">
    <property type="entry name" value="Gln_synth/guanido_kin_cat_dom"/>
</dbReference>
<dbReference type="NCBIfam" id="TIGR00133">
    <property type="entry name" value="gatB"/>
    <property type="match status" value="1"/>
</dbReference>
<dbReference type="NCBIfam" id="NF004012">
    <property type="entry name" value="PRK05477.1-2"/>
    <property type="match status" value="1"/>
</dbReference>
<dbReference type="NCBIfam" id="NF004014">
    <property type="entry name" value="PRK05477.1-4"/>
    <property type="match status" value="1"/>
</dbReference>
<dbReference type="PANTHER" id="PTHR11659">
    <property type="entry name" value="GLUTAMYL-TRNA GLN AMIDOTRANSFERASE SUBUNIT B MITOCHONDRIAL AND PROKARYOTIC PET112-RELATED"/>
    <property type="match status" value="1"/>
</dbReference>
<dbReference type="PANTHER" id="PTHR11659:SF0">
    <property type="entry name" value="GLUTAMYL-TRNA(GLN) AMIDOTRANSFERASE SUBUNIT B, MITOCHONDRIAL"/>
    <property type="match status" value="1"/>
</dbReference>
<dbReference type="Pfam" id="PF02934">
    <property type="entry name" value="GatB_N"/>
    <property type="match status" value="1"/>
</dbReference>
<dbReference type="Pfam" id="PF02637">
    <property type="entry name" value="GatB_Yqey"/>
    <property type="match status" value="1"/>
</dbReference>
<dbReference type="SMART" id="SM00845">
    <property type="entry name" value="GatB_Yqey"/>
    <property type="match status" value="1"/>
</dbReference>
<dbReference type="SUPFAM" id="SSF89095">
    <property type="entry name" value="GatB/YqeY motif"/>
    <property type="match status" value="1"/>
</dbReference>
<dbReference type="SUPFAM" id="SSF55931">
    <property type="entry name" value="Glutamine synthetase/guanido kinase"/>
    <property type="match status" value="1"/>
</dbReference>
<dbReference type="PROSITE" id="PS01234">
    <property type="entry name" value="GATB"/>
    <property type="match status" value="1"/>
</dbReference>
<proteinExistence type="inferred from homology"/>